<keyword id="KW-0067">ATP-binding</keyword>
<keyword id="KW-1003">Cell membrane</keyword>
<keyword id="KW-0472">Membrane</keyword>
<keyword id="KW-0547">Nucleotide-binding</keyword>
<keyword id="KW-1185">Reference proteome</keyword>
<keyword id="KW-1278">Translocase</keyword>
<keyword id="KW-0813">Transport</keyword>
<dbReference type="EC" id="7.5.2.4" evidence="1"/>
<dbReference type="EMBL" id="AL935263">
    <property type="protein sequence ID" value="CCC77864.1"/>
    <property type="molecule type" value="Genomic_DNA"/>
</dbReference>
<dbReference type="RefSeq" id="WP_003641921.1">
    <property type="nucleotide sequence ID" value="NC_004567.2"/>
</dbReference>
<dbReference type="RefSeq" id="YP_004888378.1">
    <property type="nucleotide sequence ID" value="NC_004567.2"/>
</dbReference>
<dbReference type="SMR" id="Q88ZH4"/>
<dbReference type="STRING" id="220668.lp_0344"/>
<dbReference type="EnsemblBacteria" id="CCC77864">
    <property type="protein sequence ID" value="CCC77864"/>
    <property type="gene ID" value="lp_0344"/>
</dbReference>
<dbReference type="KEGG" id="lpl:lp_0344"/>
<dbReference type="PATRIC" id="fig|220668.9.peg.292"/>
<dbReference type="eggNOG" id="COG1134">
    <property type="taxonomic scope" value="Bacteria"/>
</dbReference>
<dbReference type="HOGENOM" id="CLU_000604_101_8_9"/>
<dbReference type="OrthoDB" id="9778870at2"/>
<dbReference type="PhylomeDB" id="Q88ZH4"/>
<dbReference type="Proteomes" id="UP000000432">
    <property type="component" value="Chromosome"/>
</dbReference>
<dbReference type="GO" id="GO:0005886">
    <property type="term" value="C:plasma membrane"/>
    <property type="evidence" value="ECO:0007669"/>
    <property type="project" value="UniProtKB-SubCell"/>
</dbReference>
<dbReference type="GO" id="GO:0015438">
    <property type="term" value="F:ABC-type teichoic acid transporter activity"/>
    <property type="evidence" value="ECO:0007669"/>
    <property type="project" value="UniProtKB-EC"/>
</dbReference>
<dbReference type="GO" id="GO:0005524">
    <property type="term" value="F:ATP binding"/>
    <property type="evidence" value="ECO:0007669"/>
    <property type="project" value="UniProtKB-KW"/>
</dbReference>
<dbReference type="GO" id="GO:0016887">
    <property type="term" value="F:ATP hydrolysis activity"/>
    <property type="evidence" value="ECO:0007669"/>
    <property type="project" value="InterPro"/>
</dbReference>
<dbReference type="CDD" id="cd03220">
    <property type="entry name" value="ABC_KpsT_Wzt"/>
    <property type="match status" value="1"/>
</dbReference>
<dbReference type="FunFam" id="3.40.50.300:FF:003010">
    <property type="entry name" value="Teichoic acids export ATP-binding protein TagH"/>
    <property type="match status" value="1"/>
</dbReference>
<dbReference type="Gene3D" id="3.40.50.300">
    <property type="entry name" value="P-loop containing nucleotide triphosphate hydrolases"/>
    <property type="match status" value="1"/>
</dbReference>
<dbReference type="InterPro" id="IPR003593">
    <property type="entry name" value="AAA+_ATPase"/>
</dbReference>
<dbReference type="InterPro" id="IPR003439">
    <property type="entry name" value="ABC_transporter-like_ATP-bd"/>
</dbReference>
<dbReference type="InterPro" id="IPR015860">
    <property type="entry name" value="ABC_transpr_TagH-like"/>
</dbReference>
<dbReference type="InterPro" id="IPR050683">
    <property type="entry name" value="Bact_Polysacc_Export_ATP-bd"/>
</dbReference>
<dbReference type="InterPro" id="IPR027417">
    <property type="entry name" value="P-loop_NTPase"/>
</dbReference>
<dbReference type="PANTHER" id="PTHR46743">
    <property type="entry name" value="TEICHOIC ACIDS EXPORT ATP-BINDING PROTEIN TAGH"/>
    <property type="match status" value="1"/>
</dbReference>
<dbReference type="PANTHER" id="PTHR46743:SF2">
    <property type="entry name" value="TEICHOIC ACIDS EXPORT ATP-BINDING PROTEIN TAGH"/>
    <property type="match status" value="1"/>
</dbReference>
<dbReference type="Pfam" id="PF00005">
    <property type="entry name" value="ABC_tran"/>
    <property type="match status" value="1"/>
</dbReference>
<dbReference type="SMART" id="SM00382">
    <property type="entry name" value="AAA"/>
    <property type="match status" value="1"/>
</dbReference>
<dbReference type="SUPFAM" id="SSF52540">
    <property type="entry name" value="P-loop containing nucleoside triphosphate hydrolases"/>
    <property type="match status" value="1"/>
</dbReference>
<dbReference type="PROSITE" id="PS50893">
    <property type="entry name" value="ABC_TRANSPORTER_2"/>
    <property type="match status" value="1"/>
</dbReference>
<dbReference type="PROSITE" id="PS51251">
    <property type="entry name" value="TAGH"/>
    <property type="match status" value="1"/>
</dbReference>
<comment type="function">
    <text evidence="1">Part of the ABC transporter complex TagGH involved in teichoic acids export. Responsible for energy coupling to the transport system.</text>
</comment>
<comment type="catalytic activity">
    <reaction evidence="1">
        <text>ATP + H2O + teichoic acidSide 1 = ADP + phosphate + teichoic acidSide 2.</text>
        <dbReference type="EC" id="7.5.2.4"/>
    </reaction>
</comment>
<comment type="subunit">
    <text evidence="1">The complex is composed of two ATP-binding proteins (TagH) and two transmembrane proteins (TagG).</text>
</comment>
<comment type="subcellular location">
    <subcellularLocation>
        <location evidence="1">Cell membrane</location>
        <topology evidence="1">Peripheral membrane protein</topology>
    </subcellularLocation>
</comment>
<comment type="similarity">
    <text evidence="1">Belongs to the ABC transporter superfamily. Teichoic acids exporter (TC 3.A.1.104.1) family.</text>
</comment>
<organism>
    <name type="scientific">Lactiplantibacillus plantarum (strain ATCC BAA-793 / NCIMB 8826 / WCFS1)</name>
    <name type="common">Lactobacillus plantarum</name>
    <dbReference type="NCBI Taxonomy" id="220668"/>
    <lineage>
        <taxon>Bacteria</taxon>
        <taxon>Bacillati</taxon>
        <taxon>Bacillota</taxon>
        <taxon>Bacilli</taxon>
        <taxon>Lactobacillales</taxon>
        <taxon>Lactobacillaceae</taxon>
        <taxon>Lactiplantibacillus</taxon>
    </lineage>
</organism>
<gene>
    <name evidence="1" type="primary">tagH</name>
    <name type="ordered locus">lp_0344</name>
</gene>
<name>TAGH_LACPL</name>
<sequence>MENQYKVELHNVTKEYDLYRSNNDKLKHFFNIGNVDVPRFWSLKGVSLNVKPGEALGIIGINGSGKSTISNIISGIIPQTTGTVDVHGDTSIISIGAGLKWNLTGDENIRLKGLMQGLSIKEIQAVRDDIVDFADIGDFIGQPVKDYSTGMRSRLGFAIAVHINPDIMIIDEALSVGDDTFYQKCVDKIMEFKKQGKTIIFVSHNLRQVELLCDRVAWMHFGDLLEVGETKETVDHYRKFSKDFKAQTAAYRKKYQVGKKKEQADFDIVAYERQLVEEKAKDSDKSKQAVSRQVHRTLYKQILPEKMTIATKLVMLVAIVLFVFFALVNVSGHSVTSAIENPTVLLHPVNHYIKSQSVLFNSK</sequence>
<evidence type="ECO:0000255" key="1">
    <source>
        <dbReference type="HAMAP-Rule" id="MF_01715"/>
    </source>
</evidence>
<reference key="1">
    <citation type="journal article" date="2003" name="Proc. Natl. Acad. Sci. U.S.A.">
        <title>Complete genome sequence of Lactobacillus plantarum WCFS1.</title>
        <authorList>
            <person name="Kleerebezem M."/>
            <person name="Boekhorst J."/>
            <person name="van Kranenburg R."/>
            <person name="Molenaar D."/>
            <person name="Kuipers O.P."/>
            <person name="Leer R."/>
            <person name="Tarchini R."/>
            <person name="Peters S.A."/>
            <person name="Sandbrink H.M."/>
            <person name="Fiers M.W.E.J."/>
            <person name="Stiekema W."/>
            <person name="Klein Lankhorst R.M."/>
            <person name="Bron P.A."/>
            <person name="Hoffer S.M."/>
            <person name="Nierop Groot M.N."/>
            <person name="Kerkhoven R."/>
            <person name="De Vries M."/>
            <person name="Ursing B."/>
            <person name="De Vos W.M."/>
            <person name="Siezen R.J."/>
        </authorList>
    </citation>
    <scope>NUCLEOTIDE SEQUENCE [LARGE SCALE GENOMIC DNA]</scope>
    <source>
        <strain>ATCC BAA-793 / NCIMB 8826 / WCFS1</strain>
    </source>
</reference>
<reference key="2">
    <citation type="journal article" date="2012" name="J. Bacteriol.">
        <title>Complete resequencing and reannotation of the Lactobacillus plantarum WCFS1 genome.</title>
        <authorList>
            <person name="Siezen R.J."/>
            <person name="Francke C."/>
            <person name="Renckens B."/>
            <person name="Boekhorst J."/>
            <person name="Wels M."/>
            <person name="Kleerebezem M."/>
            <person name="van Hijum S.A."/>
        </authorList>
    </citation>
    <scope>NUCLEOTIDE SEQUENCE [LARGE SCALE GENOMIC DNA]</scope>
    <scope>GENOME REANNOTATION</scope>
    <source>
        <strain>ATCC BAA-793 / NCIMB 8826 / WCFS1</strain>
    </source>
</reference>
<protein>
    <recommendedName>
        <fullName evidence="1">Teichoic acids export ATP-binding protein TagH</fullName>
        <ecNumber evidence="1">7.5.2.4</ecNumber>
    </recommendedName>
</protein>
<accession>Q88ZH4</accession>
<accession>F9UTU4</accession>
<proteinExistence type="inferred from homology"/>
<feature type="chain" id="PRO_0000092991" description="Teichoic acids export ATP-binding protein TagH">
    <location>
        <begin position="1"/>
        <end position="363"/>
    </location>
</feature>
<feature type="domain" description="ABC transporter" evidence="1">
    <location>
        <begin position="27"/>
        <end position="246"/>
    </location>
</feature>
<feature type="region of interest" description="Unknown">
    <location>
        <begin position="247"/>
        <end position="363"/>
    </location>
</feature>
<feature type="binding site" evidence="1">
    <location>
        <begin position="60"/>
        <end position="67"/>
    </location>
    <ligand>
        <name>ATP</name>
        <dbReference type="ChEBI" id="CHEBI:30616"/>
    </ligand>
</feature>